<gene>
    <name evidence="1" type="primary">mdtI</name>
    <name type="ordered locus">BWG_1414</name>
</gene>
<feature type="chain" id="PRO_1000215674" description="Spermidine export protein MdtI">
    <location>
        <begin position="1"/>
        <end position="109"/>
    </location>
</feature>
<feature type="transmembrane region" description="Helical" evidence="1">
    <location>
        <begin position="6"/>
        <end position="26"/>
    </location>
</feature>
<feature type="transmembrane region" description="Helical" evidence="1">
    <location>
        <begin position="36"/>
        <end position="56"/>
    </location>
</feature>
<feature type="transmembrane region" description="Helical" evidence="1">
    <location>
        <begin position="64"/>
        <end position="84"/>
    </location>
</feature>
<feature type="transmembrane region" description="Helical" evidence="1">
    <location>
        <begin position="88"/>
        <end position="108"/>
    </location>
</feature>
<proteinExistence type="inferred from homology"/>
<name>MDTI_ECOBW</name>
<organism>
    <name type="scientific">Escherichia coli (strain K12 / MC4100 / BW2952)</name>
    <dbReference type="NCBI Taxonomy" id="595496"/>
    <lineage>
        <taxon>Bacteria</taxon>
        <taxon>Pseudomonadati</taxon>
        <taxon>Pseudomonadota</taxon>
        <taxon>Gammaproteobacteria</taxon>
        <taxon>Enterobacterales</taxon>
        <taxon>Enterobacteriaceae</taxon>
        <taxon>Escherichia</taxon>
    </lineage>
</organism>
<accession>C4ZY62</accession>
<reference key="1">
    <citation type="journal article" date="2009" name="J. Bacteriol.">
        <title>Genomic sequencing reveals regulatory mutations and recombinational events in the widely used MC4100 lineage of Escherichia coli K-12.</title>
        <authorList>
            <person name="Ferenci T."/>
            <person name="Zhou Z."/>
            <person name="Betteridge T."/>
            <person name="Ren Y."/>
            <person name="Liu Y."/>
            <person name="Feng L."/>
            <person name="Reeves P.R."/>
            <person name="Wang L."/>
        </authorList>
    </citation>
    <scope>NUCLEOTIDE SEQUENCE [LARGE SCALE GENOMIC DNA]</scope>
    <source>
        <strain>K12 / MC4100 / BW2952</strain>
    </source>
</reference>
<keyword id="KW-0997">Cell inner membrane</keyword>
<keyword id="KW-1003">Cell membrane</keyword>
<keyword id="KW-0472">Membrane</keyword>
<keyword id="KW-0812">Transmembrane</keyword>
<keyword id="KW-1133">Transmembrane helix</keyword>
<keyword id="KW-0813">Transport</keyword>
<sequence length="109" mass="11720">MAQFEWVHAAWLALAIVLEIVANVFLKFSDGFRRKIFGLLSLAAVLAAFSALSQAVKGIDLSVAYALWGGFGIAATLAAGWILFGQRLNRKGWIGLVLLLAGMIMVKLA</sequence>
<dbReference type="EMBL" id="CP001396">
    <property type="protein sequence ID" value="ACR63817.1"/>
    <property type="molecule type" value="Genomic_DNA"/>
</dbReference>
<dbReference type="RefSeq" id="WP_000046661.1">
    <property type="nucleotide sequence ID" value="NC_012759.1"/>
</dbReference>
<dbReference type="SMR" id="C4ZY62"/>
<dbReference type="GeneID" id="93775747"/>
<dbReference type="KEGG" id="ebw:BWG_1414"/>
<dbReference type="HOGENOM" id="CLU_133067_0_4_6"/>
<dbReference type="GO" id="GO:0005886">
    <property type="term" value="C:plasma membrane"/>
    <property type="evidence" value="ECO:0007669"/>
    <property type="project" value="UniProtKB-SubCell"/>
</dbReference>
<dbReference type="GO" id="GO:0015199">
    <property type="term" value="F:amino-acid betaine transmembrane transporter activity"/>
    <property type="evidence" value="ECO:0007669"/>
    <property type="project" value="TreeGrafter"/>
</dbReference>
<dbReference type="GO" id="GO:0015297">
    <property type="term" value="F:antiporter activity"/>
    <property type="evidence" value="ECO:0007669"/>
    <property type="project" value="TreeGrafter"/>
</dbReference>
<dbReference type="GO" id="GO:0015220">
    <property type="term" value="F:choline transmembrane transporter activity"/>
    <property type="evidence" value="ECO:0007669"/>
    <property type="project" value="TreeGrafter"/>
</dbReference>
<dbReference type="GO" id="GO:0015606">
    <property type="term" value="F:spermidine transmembrane transporter activity"/>
    <property type="evidence" value="ECO:0007669"/>
    <property type="project" value="UniProtKB-UniRule"/>
</dbReference>
<dbReference type="GO" id="GO:0031460">
    <property type="term" value="P:glycine betaine transport"/>
    <property type="evidence" value="ECO:0007669"/>
    <property type="project" value="TreeGrafter"/>
</dbReference>
<dbReference type="FunFam" id="1.10.3730.20:FF:000001">
    <property type="entry name" value="Quaternary ammonium compound resistance transporter SugE"/>
    <property type="match status" value="1"/>
</dbReference>
<dbReference type="Gene3D" id="1.10.3730.20">
    <property type="match status" value="1"/>
</dbReference>
<dbReference type="HAMAP" id="MF_01597">
    <property type="entry name" value="MdtI"/>
    <property type="match status" value="1"/>
</dbReference>
<dbReference type="InterPro" id="IPR000390">
    <property type="entry name" value="Small_drug/metabolite_transptr"/>
</dbReference>
<dbReference type="InterPro" id="IPR045324">
    <property type="entry name" value="Small_multidrug_res"/>
</dbReference>
<dbReference type="InterPro" id="IPR023737">
    <property type="entry name" value="Spermidine_export_MdtI"/>
</dbReference>
<dbReference type="NCBIfam" id="NF007934">
    <property type="entry name" value="PRK10650.1"/>
    <property type="match status" value="1"/>
</dbReference>
<dbReference type="PANTHER" id="PTHR30561">
    <property type="entry name" value="SMR FAMILY PROTON-DEPENDENT DRUG EFFLUX TRANSPORTER SUGE"/>
    <property type="match status" value="1"/>
</dbReference>
<dbReference type="PANTHER" id="PTHR30561:SF6">
    <property type="entry name" value="SPERMIDINE EXPORT PROTEIN MDTI"/>
    <property type="match status" value="1"/>
</dbReference>
<dbReference type="Pfam" id="PF00893">
    <property type="entry name" value="Multi_Drug_Res"/>
    <property type="match status" value="1"/>
</dbReference>
<dbReference type="SUPFAM" id="SSF103481">
    <property type="entry name" value="Multidrug resistance efflux transporter EmrE"/>
    <property type="match status" value="1"/>
</dbReference>
<comment type="function">
    <text evidence="1">Catalyzes the excretion of spermidine.</text>
</comment>
<comment type="subunit">
    <text evidence="1">Forms a complex with MdtJ.</text>
</comment>
<comment type="subcellular location">
    <subcellularLocation>
        <location evidence="1">Cell inner membrane</location>
        <topology evidence="1">Multi-pass membrane protein</topology>
    </subcellularLocation>
</comment>
<comment type="similarity">
    <text evidence="1">Belongs to the drug/metabolite transporter (DMT) superfamily. Small multidrug resistance (SMR) (TC 2.A.7.1) family. MdtI subfamily.</text>
</comment>
<evidence type="ECO:0000255" key="1">
    <source>
        <dbReference type="HAMAP-Rule" id="MF_01597"/>
    </source>
</evidence>
<protein>
    <recommendedName>
        <fullName evidence="1">Spermidine export protein MdtI</fullName>
    </recommendedName>
</protein>